<evidence type="ECO:0000250" key="1">
    <source>
        <dbReference type="UniProtKB" id="Q6ZT98"/>
    </source>
</evidence>
<evidence type="ECO:0000255" key="2">
    <source>
        <dbReference type="PROSITE-ProRule" id="PRU00568"/>
    </source>
</evidence>
<evidence type="ECO:0000269" key="3">
    <source>
    </source>
</evidence>
<evidence type="ECO:0000305" key="4"/>
<protein>
    <recommendedName>
        <fullName>Probable alpha-tubulin polyglutamylase Ttll1</fullName>
        <ecNumber>6.-.-.-</ecNumber>
    </recommendedName>
    <alternativeName>
        <fullName>Tubulin-tyrosine ligase family protein 1</fullName>
    </alternativeName>
</protein>
<sequence>MASKKLKYKTDFDKCVLTDNFAARGWTRCGDKDDDDWNIYWATVWNVRNIFNPKSGIRLNDMQIINHFPNHYELTRKDLMVKNFKRYKKELEKENSPYCQKDENGNYLYLDFIPQTFTLPGEYSLFVEEFHRNPNATWIVKPASRSQGKGIFLLRKIQQLKKIGGGTNSNPLQAFSLKEAYVVSRYIDNPLLVGGRKFDLRIYALVTSYRPLKVYLYAMGFGRFCNEQYTQDIAEMDNMFIHLTNVAIQKFSDKYSEKHGGKWSLQSLRYYLEMVYGTDMANKCFDDINNIIIMSLKSVQSIIINDKHCFEMYGYDILIDENCKPWLIEINASPSLTVTGKIDKELKTELIKNVYQIVIPDDWNDDSSKTGANTSTQTKVGDFNILYDEAQEKKISQQQQQQKKNINSKTIWK</sequence>
<organism>
    <name type="scientific">Tetrahymena thermophila (strain SB210)</name>
    <dbReference type="NCBI Taxonomy" id="312017"/>
    <lineage>
        <taxon>Eukaryota</taxon>
        <taxon>Sar</taxon>
        <taxon>Alveolata</taxon>
        <taxon>Ciliophora</taxon>
        <taxon>Intramacronucleata</taxon>
        <taxon>Oligohymenophorea</taxon>
        <taxon>Hymenostomatida</taxon>
        <taxon>Tetrahymenina</taxon>
        <taxon>Tetrahymenidae</taxon>
        <taxon>Tetrahymena</taxon>
    </lineage>
</organism>
<comment type="function">
    <text evidence="3">Probable tubulin polyglutamylase with a strong preference for alpha-tubulin. Modifies alpha-tubulin, generating side chains of glutamate on the gamma-carboxyl groups of specific glutamate residues within the C-terminal tail of alpha-tubulin.</text>
</comment>
<comment type="subcellular location">
    <subcellularLocation>
        <location evidence="3">Cytoplasm</location>
        <location evidence="3">Cytoskeleton</location>
    </subcellularLocation>
    <subcellularLocation>
        <location evidence="3">Cytoplasm</location>
        <location evidence="3">Cytoskeleton</location>
        <location evidence="3">Cilium basal body</location>
    </subcellularLocation>
    <subcellularLocation>
        <location evidence="3">Contractile vacuole</location>
    </subcellularLocation>
    <text>Associated with microtubules from basal bodies, contractile vacuole pore and oral deep fiber.</text>
</comment>
<comment type="similarity">
    <text evidence="4">Belongs to the tubulin polyglutamylase family.</text>
</comment>
<gene>
    <name type="primary">Ttll1</name>
    <name type="ORF">TTHERM_00136210</name>
</gene>
<feature type="chain" id="PRO_0000249319" description="Probable alpha-tubulin polyglutamylase Ttll1">
    <location>
        <begin position="1"/>
        <end position="413"/>
    </location>
</feature>
<feature type="domain" description="TTL" evidence="2">
    <location>
        <begin position="2"/>
        <end position="370"/>
    </location>
</feature>
<feature type="binding site" evidence="1">
    <location>
        <begin position="184"/>
        <end position="187"/>
    </location>
    <ligand>
        <name>ATP</name>
        <dbReference type="ChEBI" id="CHEBI:30616"/>
    </ligand>
</feature>
<feature type="binding site" evidence="1">
    <location>
        <position position="197"/>
    </location>
    <ligand>
        <name>ATP</name>
        <dbReference type="ChEBI" id="CHEBI:30616"/>
    </ligand>
</feature>
<feature type="binding site" evidence="1">
    <location>
        <position position="199"/>
    </location>
    <ligand>
        <name>ATP</name>
        <dbReference type="ChEBI" id="CHEBI:30616"/>
    </ligand>
</feature>
<name>TTLL1_TETTS</name>
<proteinExistence type="inferred from homology"/>
<reference key="1">
    <citation type="journal article" date="2006" name="PLoS Biol.">
        <title>Macronuclear genome sequence of the ciliate Tetrahymena thermophila, a model eukaryote.</title>
        <authorList>
            <person name="Eisen J.A."/>
            <person name="Coyne R.S."/>
            <person name="Wu M."/>
            <person name="Wu D."/>
            <person name="Thiagarajan M."/>
            <person name="Wortman J.R."/>
            <person name="Badger J.H."/>
            <person name="Ren Q."/>
            <person name="Amedeo P."/>
            <person name="Jones K.M."/>
            <person name="Tallon L.J."/>
            <person name="Delcher A.L."/>
            <person name="Salzberg S.L."/>
            <person name="Silva J.C."/>
            <person name="Haas B.J."/>
            <person name="Majoros W.H."/>
            <person name="Farzad M."/>
            <person name="Carlton J.M."/>
            <person name="Smith R.K. Jr."/>
            <person name="Garg J."/>
            <person name="Pearlman R.E."/>
            <person name="Karrer K.M."/>
            <person name="Sun L."/>
            <person name="Manning G."/>
            <person name="Elde N.C."/>
            <person name="Turkewitz A.P."/>
            <person name="Asai D.J."/>
            <person name="Wilkes D.E."/>
            <person name="Wang Y."/>
            <person name="Cai H."/>
            <person name="Collins K."/>
            <person name="Stewart B.A."/>
            <person name="Lee S.R."/>
            <person name="Wilamowska K."/>
            <person name="Weinberg Z."/>
            <person name="Ruzzo W.L."/>
            <person name="Wloga D."/>
            <person name="Gaertig J."/>
            <person name="Frankel J."/>
            <person name="Tsao C.-C."/>
            <person name="Gorovsky M.A."/>
            <person name="Keeling P.J."/>
            <person name="Waller R.F."/>
            <person name="Patron N.J."/>
            <person name="Cherry J.M."/>
            <person name="Stover N.A."/>
            <person name="Krieger C.J."/>
            <person name="del Toro C."/>
            <person name="Ryder H.F."/>
            <person name="Williamson S.C."/>
            <person name="Barbeau R.A."/>
            <person name="Hamilton E.P."/>
            <person name="Orias E."/>
        </authorList>
    </citation>
    <scope>NUCLEOTIDE SEQUENCE [LARGE SCALE GENOMIC DNA]</scope>
    <source>
        <strain>SB210</strain>
    </source>
</reference>
<reference key="2">
    <citation type="journal article" date="2005" name="Science">
        <title>Tubulin polyglutamylase enzymes are members of the TTL domain protein family.</title>
        <authorList>
            <person name="Janke C."/>
            <person name="Rogowski K."/>
            <person name="Wloga D."/>
            <person name="Regnard C."/>
            <person name="Kajava A.V."/>
            <person name="Strub J.-M."/>
            <person name="Temurak N."/>
            <person name="van Dijk J."/>
            <person name="Boucher D."/>
            <person name="van Dorsselaer A."/>
            <person name="Suryavanshi S."/>
            <person name="Gaertig J."/>
            <person name="Edde B."/>
        </authorList>
    </citation>
    <scope>FUNCTION</scope>
    <scope>SUBCELLULAR LOCATION</scope>
</reference>
<keyword id="KW-0067">ATP-binding</keyword>
<keyword id="KW-0966">Cell projection</keyword>
<keyword id="KW-0969">Cilium</keyword>
<keyword id="KW-0963">Cytoplasm</keyword>
<keyword id="KW-0206">Cytoskeleton</keyword>
<keyword id="KW-0436">Ligase</keyword>
<keyword id="KW-0493">Microtubule</keyword>
<keyword id="KW-0547">Nucleotide-binding</keyword>
<keyword id="KW-1185">Reference proteome</keyword>
<keyword id="KW-0926">Vacuole</keyword>
<accession>Q23SI8</accession>
<dbReference type="EC" id="6.-.-.-"/>
<dbReference type="EMBL" id="GG662639">
    <property type="protein sequence ID" value="EAR99457.2"/>
    <property type="molecule type" value="Genomic_DNA"/>
</dbReference>
<dbReference type="RefSeq" id="XP_001019702.2">
    <property type="nucleotide sequence ID" value="XM_001019702.3"/>
</dbReference>
<dbReference type="SMR" id="Q23SI8"/>
<dbReference type="STRING" id="312017.Q23SI8"/>
<dbReference type="EnsemblProtists" id="EAR99457">
    <property type="protein sequence ID" value="EAR99457"/>
    <property type="gene ID" value="TTHERM_00136210"/>
</dbReference>
<dbReference type="GeneID" id="7823011"/>
<dbReference type="KEGG" id="tet:TTHERM_00136210"/>
<dbReference type="eggNOG" id="KOG2157">
    <property type="taxonomic scope" value="Eukaryota"/>
</dbReference>
<dbReference type="HOGENOM" id="CLU_010131_0_0_1"/>
<dbReference type="InParanoid" id="Q23SI8"/>
<dbReference type="OrthoDB" id="202825at2759"/>
<dbReference type="BRENDA" id="6.3.2.B3">
    <property type="organism ID" value="6245"/>
</dbReference>
<dbReference type="Proteomes" id="UP000009168">
    <property type="component" value="Unassembled WGS sequence"/>
</dbReference>
<dbReference type="GO" id="GO:0036064">
    <property type="term" value="C:ciliary basal body"/>
    <property type="evidence" value="ECO:0007669"/>
    <property type="project" value="TreeGrafter"/>
</dbReference>
<dbReference type="GO" id="GO:0000331">
    <property type="term" value="C:contractile vacuole"/>
    <property type="evidence" value="ECO:0007669"/>
    <property type="project" value="UniProtKB-SubCell"/>
</dbReference>
<dbReference type="GO" id="GO:0005874">
    <property type="term" value="C:microtubule"/>
    <property type="evidence" value="ECO:0007669"/>
    <property type="project" value="UniProtKB-KW"/>
</dbReference>
<dbReference type="GO" id="GO:0005524">
    <property type="term" value="F:ATP binding"/>
    <property type="evidence" value="ECO:0007669"/>
    <property type="project" value="UniProtKB-KW"/>
</dbReference>
<dbReference type="GO" id="GO:0015631">
    <property type="term" value="F:tubulin binding"/>
    <property type="evidence" value="ECO:0007669"/>
    <property type="project" value="TreeGrafter"/>
</dbReference>
<dbReference type="GO" id="GO:0070740">
    <property type="term" value="F:tubulin-glutamic acid ligase activity"/>
    <property type="evidence" value="ECO:0000314"/>
    <property type="project" value="UniProtKB"/>
</dbReference>
<dbReference type="GO" id="GO:0000226">
    <property type="term" value="P:microtubule cytoskeleton organization"/>
    <property type="evidence" value="ECO:0007669"/>
    <property type="project" value="TreeGrafter"/>
</dbReference>
<dbReference type="GO" id="GO:0018095">
    <property type="term" value="P:protein polyglutamylation"/>
    <property type="evidence" value="ECO:0000314"/>
    <property type="project" value="UniProtKB"/>
</dbReference>
<dbReference type="FunFam" id="3.30.470.20:FF:000033">
    <property type="entry name" value="Probable tubulin polyglutamylase TTLL1"/>
    <property type="match status" value="1"/>
</dbReference>
<dbReference type="Gene3D" id="3.30.470.20">
    <property type="entry name" value="ATP-grasp fold, B domain"/>
    <property type="match status" value="1"/>
</dbReference>
<dbReference type="InterPro" id="IPR004344">
    <property type="entry name" value="TTL/TTLL_fam"/>
</dbReference>
<dbReference type="PANTHER" id="PTHR12241:SF31">
    <property type="entry name" value="POLYGLUTAMYLASE COMPLEX SUBUNIT TTLL1"/>
    <property type="match status" value="1"/>
</dbReference>
<dbReference type="PANTHER" id="PTHR12241">
    <property type="entry name" value="TUBULIN POLYGLUTAMYLASE"/>
    <property type="match status" value="1"/>
</dbReference>
<dbReference type="Pfam" id="PF03133">
    <property type="entry name" value="TTL"/>
    <property type="match status" value="1"/>
</dbReference>
<dbReference type="SUPFAM" id="SSF56059">
    <property type="entry name" value="Glutathione synthetase ATP-binding domain-like"/>
    <property type="match status" value="1"/>
</dbReference>
<dbReference type="PROSITE" id="PS51221">
    <property type="entry name" value="TTL"/>
    <property type="match status" value="1"/>
</dbReference>